<gene>
    <name type="ordered locus">VC_0467</name>
</gene>
<keyword id="KW-0002">3D-structure</keyword>
<keyword id="KW-1185">Reference proteome</keyword>
<evidence type="ECO:0000255" key="1">
    <source>
        <dbReference type="HAMAP-Rule" id="MF_00758"/>
    </source>
</evidence>
<evidence type="ECO:0000305" key="2"/>
<evidence type="ECO:0007829" key="3">
    <source>
        <dbReference type="PDB" id="2HAF"/>
    </source>
</evidence>
<dbReference type="EMBL" id="AE003852">
    <property type="protein sequence ID" value="AAF93640.1"/>
    <property type="status" value="ALT_INIT"/>
    <property type="molecule type" value="Genomic_DNA"/>
</dbReference>
<dbReference type="PIR" id="H82318">
    <property type="entry name" value="H82318"/>
</dbReference>
<dbReference type="RefSeq" id="NP_230121.2">
    <property type="nucleotide sequence ID" value="NC_002505.1"/>
</dbReference>
<dbReference type="RefSeq" id="WP_001054768.1">
    <property type="nucleotide sequence ID" value="NZ_LT906614.1"/>
</dbReference>
<dbReference type="PDB" id="2AJ2">
    <property type="method" value="X-ray"/>
    <property type="resolution" value="3.21 A"/>
    <property type="chains" value="A=1-187"/>
</dbReference>
<dbReference type="PDB" id="2HAF">
    <property type="method" value="X-ray"/>
    <property type="resolution" value="2.88 A"/>
    <property type="chains" value="A=1-186"/>
</dbReference>
<dbReference type="PDBsum" id="2AJ2"/>
<dbReference type="PDBsum" id="2HAF"/>
<dbReference type="SMR" id="Q9KUP8"/>
<dbReference type="STRING" id="243277.VC_0467"/>
<dbReference type="DNASU" id="2615129"/>
<dbReference type="EnsemblBacteria" id="AAF93640">
    <property type="protein sequence ID" value="AAF93640"/>
    <property type="gene ID" value="VC_0467"/>
</dbReference>
<dbReference type="KEGG" id="vch:VC_0467"/>
<dbReference type="PATRIC" id="fig|243277.26.peg.440"/>
<dbReference type="eggNOG" id="COG1678">
    <property type="taxonomic scope" value="Bacteria"/>
</dbReference>
<dbReference type="HOGENOM" id="CLU_057596_1_0_6"/>
<dbReference type="EvolutionaryTrace" id="Q9KUP8"/>
<dbReference type="Proteomes" id="UP000000584">
    <property type="component" value="Chromosome 1"/>
</dbReference>
<dbReference type="GO" id="GO:0005829">
    <property type="term" value="C:cytosol"/>
    <property type="evidence" value="ECO:0000318"/>
    <property type="project" value="GO_Central"/>
</dbReference>
<dbReference type="Gene3D" id="3.40.1740.10">
    <property type="entry name" value="VC0467-like"/>
    <property type="match status" value="1"/>
</dbReference>
<dbReference type="Gene3D" id="3.30.70.1300">
    <property type="entry name" value="VC0467-like domains"/>
    <property type="match status" value="1"/>
</dbReference>
<dbReference type="HAMAP" id="MF_00758">
    <property type="entry name" value="UPF0301"/>
    <property type="match status" value="1"/>
</dbReference>
<dbReference type="InterPro" id="IPR003774">
    <property type="entry name" value="AlgH-like"/>
</dbReference>
<dbReference type="NCBIfam" id="NF001266">
    <property type="entry name" value="PRK00228.1-1"/>
    <property type="match status" value="1"/>
</dbReference>
<dbReference type="PANTHER" id="PTHR30327">
    <property type="entry name" value="UNCHARACTERIZED PROTEIN YQGE"/>
    <property type="match status" value="1"/>
</dbReference>
<dbReference type="PANTHER" id="PTHR30327:SF1">
    <property type="entry name" value="UPF0301 PROTEIN YQGE"/>
    <property type="match status" value="1"/>
</dbReference>
<dbReference type="Pfam" id="PF02622">
    <property type="entry name" value="DUF179"/>
    <property type="match status" value="1"/>
</dbReference>
<dbReference type="SUPFAM" id="SSF143456">
    <property type="entry name" value="VC0467-like"/>
    <property type="match status" value="1"/>
</dbReference>
<name>Y467_VIBCH</name>
<accession>Q9KUP8</accession>
<organism>
    <name type="scientific">Vibrio cholerae serotype O1 (strain ATCC 39315 / El Tor Inaba N16961)</name>
    <dbReference type="NCBI Taxonomy" id="243277"/>
    <lineage>
        <taxon>Bacteria</taxon>
        <taxon>Pseudomonadati</taxon>
        <taxon>Pseudomonadota</taxon>
        <taxon>Gammaproteobacteria</taxon>
        <taxon>Vibrionales</taxon>
        <taxon>Vibrionaceae</taxon>
        <taxon>Vibrio</taxon>
    </lineage>
</organism>
<reference key="1">
    <citation type="journal article" date="2000" name="Nature">
        <title>DNA sequence of both chromosomes of the cholera pathogen Vibrio cholerae.</title>
        <authorList>
            <person name="Heidelberg J.F."/>
            <person name="Eisen J.A."/>
            <person name="Nelson W.C."/>
            <person name="Clayton R.A."/>
            <person name="Gwinn M.L."/>
            <person name="Dodson R.J."/>
            <person name="Haft D.H."/>
            <person name="Hickey E.K."/>
            <person name="Peterson J.D."/>
            <person name="Umayam L.A."/>
            <person name="Gill S.R."/>
            <person name="Nelson K.E."/>
            <person name="Read T.D."/>
            <person name="Tettelin H."/>
            <person name="Richardson D.L."/>
            <person name="Ermolaeva M.D."/>
            <person name="Vamathevan J.J."/>
            <person name="Bass S."/>
            <person name="Qin H."/>
            <person name="Dragoi I."/>
            <person name="Sellers P."/>
            <person name="McDonald L.A."/>
            <person name="Utterback T.R."/>
            <person name="Fleischmann R.D."/>
            <person name="Nierman W.C."/>
            <person name="White O."/>
            <person name="Salzberg S.L."/>
            <person name="Smith H.O."/>
            <person name="Colwell R.R."/>
            <person name="Mekalanos J.J."/>
            <person name="Venter J.C."/>
            <person name="Fraser C.M."/>
        </authorList>
    </citation>
    <scope>NUCLEOTIDE SEQUENCE [LARGE SCALE GENOMIC DNA]</scope>
    <source>
        <strain>ATCC 39315 / El Tor Inaba N16961</strain>
    </source>
</reference>
<comment type="similarity">
    <text evidence="1">Belongs to the UPF0301 (AlgH) family.</text>
</comment>
<comment type="sequence caution" evidence="2">
    <conflict type="erroneous initiation">
        <sequence resource="EMBL-CDS" id="AAF93640"/>
    </conflict>
</comment>
<protein>
    <recommendedName>
        <fullName evidence="1">UPF0301 protein VC_0467</fullName>
    </recommendedName>
</protein>
<sequence length="187" mass="20726">MNLTNHFLVAMPSMKDPYFKRSVIYICEHNQDGAMGLMINAPIDITVGGMLKQVDIEPAYPQSHQENLKKPVFNGGPVSEDRGFILHRPRDHYESSMKMTDDIAVTTSKDILTVLGTEAEPEGYIVALGYSGWSAGQLEVELTENSWLTIEADPELIFNTPVHEKWQKAIQKLGISPAQLSSDAGHA</sequence>
<feature type="chain" id="PRO_0000214350" description="UPF0301 protein VC_0467">
    <location>
        <begin position="1"/>
        <end position="187"/>
    </location>
</feature>
<feature type="strand" evidence="3">
    <location>
        <begin position="6"/>
        <end position="10"/>
    </location>
</feature>
<feature type="helix" evidence="3">
    <location>
        <begin position="17"/>
        <end position="19"/>
    </location>
</feature>
<feature type="strand" evidence="3">
    <location>
        <begin position="23"/>
        <end position="30"/>
    </location>
</feature>
<feature type="strand" evidence="3">
    <location>
        <begin position="33"/>
        <end position="40"/>
    </location>
</feature>
<feature type="strand" evidence="3">
    <location>
        <begin position="42"/>
        <end position="46"/>
    </location>
</feature>
<feature type="helix" evidence="3">
    <location>
        <begin position="47"/>
        <end position="53"/>
    </location>
</feature>
<feature type="helix" evidence="3">
    <location>
        <begin position="67"/>
        <end position="69"/>
    </location>
</feature>
<feature type="strand" evidence="3">
    <location>
        <begin position="70"/>
        <end position="74"/>
    </location>
</feature>
<feature type="strand" evidence="3">
    <location>
        <begin position="77"/>
        <end position="87"/>
    </location>
</feature>
<feature type="strand" evidence="3">
    <location>
        <begin position="94"/>
        <end position="98"/>
    </location>
</feature>
<feature type="strand" evidence="3">
    <location>
        <begin position="100"/>
        <end position="102"/>
    </location>
</feature>
<feature type="strand" evidence="3">
    <location>
        <begin position="104"/>
        <end position="106"/>
    </location>
</feature>
<feature type="helix" evidence="3">
    <location>
        <begin position="109"/>
        <end position="114"/>
    </location>
</feature>
<feature type="strand" evidence="3">
    <location>
        <begin position="122"/>
        <end position="134"/>
    </location>
</feature>
<feature type="helix" evidence="3">
    <location>
        <begin position="137"/>
        <end position="143"/>
    </location>
</feature>
<feature type="strand" evidence="3">
    <location>
        <begin position="146"/>
        <end position="151"/>
    </location>
</feature>
<feature type="helix" evidence="3">
    <location>
        <begin position="154"/>
        <end position="158"/>
    </location>
</feature>
<feature type="helix" evidence="3">
    <location>
        <begin position="162"/>
        <end position="164"/>
    </location>
</feature>
<feature type="helix" evidence="3">
    <location>
        <begin position="165"/>
        <end position="172"/>
    </location>
</feature>
<proteinExistence type="evidence at protein level"/>